<proteinExistence type="inferred from homology"/>
<dbReference type="EMBL" id="D00377">
    <property type="protein sequence ID" value="BAA00280.1"/>
    <property type="molecule type" value="Genomic_RNA"/>
</dbReference>
<dbReference type="PIR" id="JS0605">
    <property type="entry name" value="JS0605"/>
</dbReference>
<dbReference type="SMR" id="P16853"/>
<dbReference type="GlyCosmos" id="P16853">
    <property type="glycosylation" value="5 sites, No reported glycans"/>
</dbReference>
<dbReference type="GO" id="GO:0044167">
    <property type="term" value="C:host cell endoplasmic reticulum membrane"/>
    <property type="evidence" value="ECO:0007669"/>
    <property type="project" value="UniProtKB-SubCell"/>
</dbReference>
<dbReference type="GO" id="GO:0044178">
    <property type="term" value="C:host cell Golgi membrane"/>
    <property type="evidence" value="ECO:0007669"/>
    <property type="project" value="UniProtKB-SubCell"/>
</dbReference>
<dbReference type="GO" id="GO:0033650">
    <property type="term" value="C:host cell mitochondrion"/>
    <property type="evidence" value="ECO:0007669"/>
    <property type="project" value="UniProtKB-SubCell"/>
</dbReference>
<dbReference type="GO" id="GO:0044228">
    <property type="term" value="C:host cell surface"/>
    <property type="evidence" value="ECO:0007669"/>
    <property type="project" value="UniProtKB-SubCell"/>
</dbReference>
<dbReference type="GO" id="GO:0016020">
    <property type="term" value="C:membrane"/>
    <property type="evidence" value="ECO:0007669"/>
    <property type="project" value="UniProtKB-KW"/>
</dbReference>
<dbReference type="GO" id="GO:0019031">
    <property type="term" value="C:viral envelope"/>
    <property type="evidence" value="ECO:0007669"/>
    <property type="project" value="UniProtKB-KW"/>
</dbReference>
<dbReference type="GO" id="GO:0055036">
    <property type="term" value="C:virion membrane"/>
    <property type="evidence" value="ECO:0007669"/>
    <property type="project" value="UniProtKB-SubCell"/>
</dbReference>
<dbReference type="GO" id="GO:0008270">
    <property type="term" value="F:zinc ion binding"/>
    <property type="evidence" value="ECO:0007669"/>
    <property type="project" value="UniProtKB-KW"/>
</dbReference>
<dbReference type="GO" id="GO:0075509">
    <property type="term" value="P:endocytosis involved in viral entry into host cell"/>
    <property type="evidence" value="ECO:0007669"/>
    <property type="project" value="UniProtKB-KW"/>
</dbReference>
<dbReference type="GO" id="GO:0039654">
    <property type="term" value="P:fusion of virus membrane with host endosome membrane"/>
    <property type="evidence" value="ECO:0007669"/>
    <property type="project" value="UniProtKB-KW"/>
</dbReference>
<dbReference type="GO" id="GO:0007165">
    <property type="term" value="P:signal transduction"/>
    <property type="evidence" value="ECO:0007669"/>
    <property type="project" value="InterPro"/>
</dbReference>
<dbReference type="GO" id="GO:0052170">
    <property type="term" value="P:symbiont-mediated suppression of host innate immune response"/>
    <property type="evidence" value="ECO:0007669"/>
    <property type="project" value="UniProtKB-KW"/>
</dbReference>
<dbReference type="GO" id="GO:0039527">
    <property type="term" value="P:symbiont-mediated suppression of host TRAF-mediated signal transduction"/>
    <property type="evidence" value="ECO:0007669"/>
    <property type="project" value="UniProtKB-KW"/>
</dbReference>
<dbReference type="GO" id="GO:0019062">
    <property type="term" value="P:virion attachment to host cell"/>
    <property type="evidence" value="ECO:0007669"/>
    <property type="project" value="UniProtKB-KW"/>
</dbReference>
<dbReference type="Gene3D" id="1.10.8.1320">
    <property type="match status" value="1"/>
</dbReference>
<dbReference type="InterPro" id="IPR016402">
    <property type="entry name" value="Envelope_glycoprot_Hantavirus"/>
</dbReference>
<dbReference type="InterPro" id="IPR048791">
    <property type="entry name" value="Gc_C_bunya"/>
</dbReference>
<dbReference type="InterPro" id="IPR048790">
    <property type="entry name" value="Gn-B_hanta"/>
</dbReference>
<dbReference type="InterPro" id="IPR002532">
    <property type="entry name" value="Hanta_Gc_N"/>
</dbReference>
<dbReference type="InterPro" id="IPR002534">
    <property type="entry name" value="Hanta_Gn-H"/>
</dbReference>
<dbReference type="InterPro" id="IPR012316">
    <property type="entry name" value="ITAM_motif_hantavir-typ"/>
</dbReference>
<dbReference type="Pfam" id="PF20682">
    <property type="entry name" value="Hanta_Gc_C"/>
    <property type="match status" value="1"/>
</dbReference>
<dbReference type="Pfam" id="PF01561">
    <property type="entry name" value="Hanta_Gc_N"/>
    <property type="match status" value="1"/>
</dbReference>
<dbReference type="Pfam" id="PF20679">
    <property type="entry name" value="Hanta_Gn-B"/>
    <property type="match status" value="1"/>
</dbReference>
<dbReference type="Pfam" id="PF01567">
    <property type="entry name" value="Hanta_Gn-H"/>
    <property type="match status" value="1"/>
</dbReference>
<dbReference type="Pfam" id="PF10538">
    <property type="entry name" value="ITAM_Cys-rich"/>
    <property type="match status" value="1"/>
</dbReference>
<dbReference type="PIRSF" id="PIRSF003945">
    <property type="entry name" value="M_poly_HantaV"/>
    <property type="match status" value="1"/>
</dbReference>
<dbReference type="PROSITE" id="PS51056">
    <property type="entry name" value="ITAM_2"/>
    <property type="match status" value="1"/>
</dbReference>
<evidence type="ECO:0000250" key="1"/>
<evidence type="ECO:0000250" key="2">
    <source>
        <dbReference type="UniProtKB" id="P08668"/>
    </source>
</evidence>
<evidence type="ECO:0000250" key="3">
    <source>
        <dbReference type="UniProtKB" id="P0DTJ1"/>
    </source>
</evidence>
<evidence type="ECO:0000250" key="4">
    <source>
        <dbReference type="UniProtKB" id="P27312"/>
    </source>
</evidence>
<evidence type="ECO:0000250" key="5">
    <source>
        <dbReference type="UniProtKB" id="P41266"/>
    </source>
</evidence>
<evidence type="ECO:0000250" key="6">
    <source>
        <dbReference type="UniProtKB" id="Q9E006"/>
    </source>
</evidence>
<evidence type="ECO:0000255" key="7"/>
<evidence type="ECO:0000255" key="8">
    <source>
        <dbReference type="PROSITE-ProRule" id="PRU00379"/>
    </source>
</evidence>
<evidence type="ECO:0000305" key="9"/>
<sequence>MGIWKWLVMASLVWPVLTLRNVYDMKIECPHTVSFGENSVIGYVELPPMPLADTAQLVPESSCSMDNHQSLNTITKYTQVSWRGKADQSQSSQTSFETVSTEVDLKGTCVLKHKMVEESYRSRKSITCYDLSCNSTYCKPTLYMIVPIHACNMMKSCLIALGPYRVQVVYERTYCMTGVLIEGKCFVPDQSVVSIIKHGIFDIASVHIVCFFVAVKGNTYKIFEQVKKSFESTCNDTENKVQGYYICIVGGNSAPIYVPTLDDFRSMEAFTGIFRSPHGEDHDLAGEETATYSIVGPANAKVPHSASSDTLSLIAFSGIPSDSSLSILTSSTEAKHVFSPGLFPKLNHTNCDKGAIPLMWTGMIDLPGYYEAIHPCTVFCVLSGPGASCEAFSEGGIFNITYPMCLVSKQNRFRLTEQQVNFVCQRVDVDIVVYCNGQRKVILTKTLVIGQCIYTITSLFSLLPGVAHSIAVELCVPGFHGWATAALLVTFCFGWVLIPAITFIILTILKFIANIFHTSNQENRLKSVLRKIKEEFEKTKGSMVCDVCKYECETYKELKAHGVSCPQSQCPYCFTHCEPTEAAFQAHYKVCQVTHRFRDDLKKTVTPQNFTPGCYRTLNLFRYKSRCYIFTMWIFLLVLESILWAASASETPLTPVWNDNAHGVGSVPMHTDLELDFSLTSSSKYTYRRKLTNPLEEAQSIDLHIEIEEQTIGVDVHALGHWFDGRLNLKTSFHCYGACTKYEYPWHTAKCHYERDYQYETSWGCNPSDCPGVGTGCTACGLYLDRLKPVGSAYKIITIRYSRRVCVQFGEENLCKIIDMNDCFVSRHVKVCIIGTVSKFSQGDTLLFFGPLEGGGLIFKHWCTSTCQFGDPGDIMSPRDKGFLCPEFPGSFRKKCNFATTPICEYDGNMVSGYKKVMATIDSFQSFNTSTMHFTDERIEWKDPDGMLRDHINILVTKDIDFDNLGENPCKIGLQTSSIEGAWGSGVGFTLTCLVSLTECPTFLTSIKACDKAICYGAESVTLTRGQNTVKVSGKGGHSGSTFKCCHGEDCSQIGLHAAAPHLDKVNGISEMENSKEYDDGAPQCGIKCWFVKSGEWISGIFSGNWIVLIVLCVFLLFSLVLLSILCPVRKHKKS</sequence>
<feature type="signal peptide" evidence="7">
    <location>
        <begin position="1"/>
        <end position="18"/>
    </location>
</feature>
<feature type="chain" id="PRO_0000036812" description="Envelopment polyprotein">
    <location>
        <begin position="19"/>
        <end position="1135"/>
    </location>
</feature>
<feature type="chain" id="PRO_0000036813" description="Glycoprotein N" evidence="1">
    <location>
        <begin position="19"/>
        <end position="648"/>
    </location>
</feature>
<feature type="chain" id="PRO_0000036814" description="Glycoprotein C" evidence="1">
    <location>
        <begin position="649"/>
        <end position="1135"/>
    </location>
</feature>
<feature type="topological domain" description="Lumenal" evidence="7">
    <location>
        <begin position="19"/>
        <end position="485"/>
    </location>
</feature>
<feature type="transmembrane region" description="Helical" evidence="7">
    <location>
        <begin position="486"/>
        <end position="506"/>
    </location>
</feature>
<feature type="topological domain" description="Cytoplasmic" evidence="7">
    <location>
        <begin position="507"/>
        <end position="627"/>
    </location>
</feature>
<feature type="transmembrane region" description="Helical" evidence="7">
    <location>
        <begin position="628"/>
        <end position="648"/>
    </location>
</feature>
<feature type="topological domain" description="Lumenal" evidence="7">
    <location>
        <begin position="649"/>
        <end position="1105"/>
    </location>
</feature>
<feature type="transmembrane region" description="Helical" evidence="7">
    <location>
        <begin position="1106"/>
        <end position="1126"/>
    </location>
</feature>
<feature type="topological domain" description="Cytoplasmic" evidence="7">
    <location>
        <begin position="1127"/>
        <end position="1135"/>
    </location>
</feature>
<feature type="domain" description="ITAM" evidence="8">
    <location>
        <begin position="611"/>
        <end position="634"/>
    </location>
</feature>
<feature type="zinc finger region" description="CCHC-type 1" evidence="6">
    <location>
        <begin position="545"/>
        <end position="565"/>
    </location>
</feature>
<feature type="zinc finger region" description="CCHC-type 2" evidence="6">
    <location>
        <begin position="570"/>
        <end position="591"/>
    </location>
</feature>
<feature type="region of interest" description="Binding to the ribonucleoprotein" evidence="6">
    <location>
        <begin position="516"/>
        <end position="533"/>
    </location>
</feature>
<feature type="region of interest" description="Binding to the ribonucleoprotein" evidence="4">
    <location>
        <begin position="588"/>
        <end position="605"/>
    </location>
</feature>
<feature type="region of interest" description="Binding to the ribonucleoprotein" evidence="6">
    <location>
        <begin position="592"/>
        <end position="603"/>
    </location>
</feature>
<feature type="region of interest" description="Binding to the ribonucleoprotein" evidence="4">
    <location>
        <begin position="611"/>
        <end position="625"/>
    </location>
</feature>
<feature type="region of interest" description="Fusion loop" evidence="5">
    <location>
        <begin position="757"/>
        <end position="777"/>
    </location>
</feature>
<feature type="region of interest" description="Binding to the ribonucleoprotein" evidence="4">
    <location>
        <begin position="1122"/>
        <end position="1135"/>
    </location>
</feature>
<feature type="short sequence motif" description="YxxL" evidence="2">
    <location>
        <begin position="615"/>
        <end position="618"/>
    </location>
</feature>
<feature type="site" description="Cleavage; by host signal peptidase" evidence="2">
    <location>
        <begin position="648"/>
        <end position="649"/>
    </location>
</feature>
<feature type="glycosylation site" description="N-linked (GlcNAc...) asparagine; by host" evidence="7">
    <location>
        <position position="134"/>
    </location>
</feature>
<feature type="glycosylation site" description="N-linked (GlcNAc...) asparagine; by host" evidence="7">
    <location>
        <position position="235"/>
    </location>
</feature>
<feature type="glycosylation site" description="N-linked (GlcNAc...) asparagine; by host" evidence="7">
    <location>
        <position position="347"/>
    </location>
</feature>
<feature type="glycosylation site" description="N-linked (GlcNAc...) asparagine; by host" evidence="7">
    <location>
        <position position="399"/>
    </location>
</feature>
<feature type="glycosylation site" description="N-linked (GlcNAc...) asparagine; by host" evidence="2">
    <location>
        <position position="928"/>
    </location>
</feature>
<feature type="disulfide bond" evidence="6">
    <location>
        <begin position="29"/>
        <end position="151"/>
    </location>
</feature>
<feature type="disulfide bond" evidence="6">
    <location>
        <begin position="63"/>
        <end position="157"/>
    </location>
</feature>
<feature type="disulfide bond" evidence="6">
    <location>
        <begin position="109"/>
        <end position="128"/>
    </location>
</feature>
<feature type="disulfide bond" evidence="6">
    <location>
        <begin position="133"/>
        <end position="138"/>
    </location>
</feature>
<feature type="disulfide bond" evidence="6">
    <location>
        <begin position="175"/>
        <end position="185"/>
    </location>
</feature>
<feature type="disulfide bond" evidence="6">
    <location>
        <begin position="210"/>
        <end position="247"/>
    </location>
</feature>
<feature type="disulfide bond" evidence="6">
    <location>
        <begin position="234"/>
        <end position="351"/>
    </location>
</feature>
<feature type="disulfide bond" evidence="6">
    <location>
        <begin position="376"/>
        <end position="435"/>
    </location>
</feature>
<feature type="disulfide bond" evidence="6">
    <location>
        <begin position="380"/>
        <end position="389"/>
    </location>
</feature>
<feature type="disulfide bond" evidence="6">
    <location>
        <begin position="405"/>
        <end position="424"/>
    </location>
</feature>
<feature type="disulfide bond" evidence="6">
    <location>
        <begin position="452"/>
        <end position="475"/>
    </location>
</feature>
<feature type="disulfide bond" evidence="2">
    <location>
        <begin position="735"/>
        <end position="770"/>
    </location>
</feature>
<feature type="disulfide bond" evidence="2">
    <location>
        <begin position="739"/>
        <end position="777"/>
    </location>
</feature>
<feature type="disulfide bond" evidence="2">
    <location>
        <begin position="751"/>
        <end position="885"/>
    </location>
</feature>
<feature type="disulfide bond" evidence="2">
    <location>
        <begin position="765"/>
        <end position="896"/>
    </location>
</feature>
<feature type="disulfide bond" evidence="2">
    <location>
        <begin position="780"/>
        <end position="904"/>
    </location>
</feature>
<feature type="disulfide bond" evidence="2">
    <location>
        <begin position="806"/>
        <end position="815"/>
    </location>
</feature>
<feature type="disulfide bond" evidence="2">
    <location>
        <begin position="823"/>
        <end position="832"/>
    </location>
</feature>
<feature type="disulfide bond" evidence="2">
    <location>
        <begin position="863"/>
        <end position="867"/>
    </location>
</feature>
<feature type="disulfide bond" evidence="2">
    <location>
        <begin position="970"/>
        <end position="1000"/>
    </location>
</feature>
<feature type="disulfide bond" evidence="2">
    <location>
        <begin position="993"/>
        <end position="1045"/>
    </location>
</feature>
<feature type="disulfide bond" evidence="2">
    <location>
        <begin position="1010"/>
        <end position="1015"/>
    </location>
</feature>
<feature type="disulfide bond" evidence="2">
    <location>
        <begin position="1046"/>
        <end position="1051"/>
    </location>
</feature>
<feature type="disulfide bond" evidence="6">
    <location>
        <begin position="1085"/>
        <end position="1089"/>
    </location>
</feature>
<accession>P16853</accession>
<name>GP_HANTL</name>
<gene>
    <name type="primary">GP</name>
</gene>
<reference key="1">
    <citation type="journal article" date="1988" name="J. Gen. Virol.">
        <title>Conservation of antigenic properties and sequences encoding the envelope proteins of prototype Hantaan virus and two virus isolates from Korean haemorrhagic fever patients.</title>
        <authorList>
            <person name="Schmaljohn C.S."/>
            <person name="Arikawa J."/>
            <person name="Hasty S.E."/>
            <person name="Rasmussen L."/>
            <person name="Lee H.W."/>
            <person name="Lee P.W."/>
            <person name="Dalrymple J.M."/>
        </authorList>
    </citation>
    <scope>NUCLEOTIDE SEQUENCE [GENOMIC RNA]</scope>
</reference>
<reference key="2">
    <citation type="journal article" date="2014" name="Viruses">
        <title>Hantavirus Gn and Gc envelope glycoproteins: key structural units for virus cell entry and virus assembly.</title>
        <authorList>
            <person name="Cifuentes-Munoz N."/>
            <person name="Salazar-Quiroz N."/>
            <person name="Tischler N.D."/>
        </authorList>
    </citation>
    <scope>REVIEW</scope>
</reference>
<organism>
    <name type="scientific">Hantaan virus (strain Lee)</name>
    <name type="common">Lee virus</name>
    <name type="synonym">Korean hemorrhagic fever virus</name>
    <dbReference type="NCBI Taxonomy" id="11601"/>
    <lineage>
        <taxon>Viruses</taxon>
        <taxon>Riboviria</taxon>
        <taxon>Orthornavirae</taxon>
        <taxon>Negarnaviricota</taxon>
        <taxon>Polyploviricotina</taxon>
        <taxon>Ellioviricetes</taxon>
        <taxon>Bunyavirales</taxon>
        <taxon>Hantaviridae</taxon>
        <taxon>Mammantavirinae</taxon>
        <taxon>Orthohantavirus</taxon>
        <taxon>Orthohantavirus hantanense</taxon>
    </lineage>
</organism>
<protein>
    <recommendedName>
        <fullName>Envelopment polyprotein</fullName>
    </recommendedName>
    <alternativeName>
        <fullName>M polyprotein</fullName>
    </alternativeName>
    <component>
        <recommendedName>
            <fullName evidence="2">Glycoprotein N</fullName>
            <shortName>Gn</shortName>
        </recommendedName>
        <alternativeName>
            <fullName>Glycoprotein G1</fullName>
        </alternativeName>
    </component>
    <component>
        <recommendedName>
            <fullName evidence="2">Glycoprotein C</fullName>
            <shortName>Gc</shortName>
        </recommendedName>
        <alternativeName>
            <fullName>Glycoprotein G2</fullName>
        </alternativeName>
    </component>
</protein>
<comment type="function">
    <molecule>Glycoprotein N</molecule>
    <text evidence="2 4">Forms homotetramers with glycoprotein C at the surface of the virion (By similarity). Attaches the virion to host cell receptors including integrin ITGAV/ITGB3 (By similarity). This attachment induces virion internalization predominantly through clathrin-dependent endocytosis (By similarity). May also bind to host C1QBP for virus entry into the host cell (By similarity). Mediates the assembly and budding of infectious virus particles through its interaction with the nucleocapsid protein and the viral genome (By similarity). May dysregulate normal immune and endothelial cell responses through an ITAM motif (By similarity). Translocates to mitochondria, binds to host TUFM and recruits MAP1LC3B (By similarity). These interactions induce mitochondrial autophagy and therefore destruction of host MAVS leading to inhibition of type I interferon (IFN) responses (By similarity). Concomitant breakdown of glycoprotein N is apparently prevented by the nucleoprotein that may inhibit Gn-stimulated autophagosome-lysosome fusion (By similarity). Interacts with the viral genomic RNA (By similarity).</text>
</comment>
<comment type="function">
    <molecule>Glycoprotein C</molecule>
    <text evidence="2">Forms homotetramers with glycoprotein N at the surface of the virion (By similarity). Attaches the virion to host cell receptors including integrin ITGAV/ITGB3 (By similarity). This attachment induces virion internalization predominantly through clathrin-dependent endocytosis (By similarity). May also bind to host C1QBP for virus entry into the host cell (By similarity). Class II fusion protein that promotes fusion of viral membrane with host endosomal membrane after endocytosis of the virion (By similarity).</text>
</comment>
<comment type="subunit">
    <molecule>Glycoprotein N</molecule>
    <text evidence="2 3">Homodimer (By similarity). Homotetramer; forms heterotetrameric Gn-Gc spikes in the pre-fusion conformation (By similarity). Interacts (via C-terminus) with the nucleoprotein (By similarity). Interacts with host TUFM; this interaction contributes to the virus-induced degradation of mitochondria by autophagy, which leads to degradation of host MAVS and inhibition of type I interferon (IFN) responses (By similarity). Interacts with host MAP1LC3B; this interaction contributes to the virus-induced degradation of mitochondria by autophagy, which leads to degradation of host MAVS and inhibition of type I interferon (IFN) responses (By similarity).</text>
</comment>
<comment type="subunit">
    <molecule>Glycoprotein C</molecule>
    <text evidence="2 4">Homodimer. Homotetramer; forms heterotetrameric Gn-Gc spikes in the pre-fusion conformation. Homotrimer; forms homotrimer in the post-fusion conformation at acidic pH (By similarity). Interacts (via C-terminus) with the nucleoprotein (By similarity).</text>
</comment>
<comment type="subcellular location">
    <molecule>Glycoprotein N</molecule>
    <subcellularLocation>
        <location evidence="2">Virion membrane</location>
        <topology>Multi-pass membrane protein</topology>
    </subcellularLocation>
    <subcellularLocation>
        <location evidence="2">Host cell surface</location>
    </subcellularLocation>
    <subcellularLocation>
        <location evidence="2">Host Golgi apparatus membrane</location>
        <topology evidence="2">Multi-pass membrane protein</topology>
    </subcellularLocation>
    <subcellularLocation>
        <location evidence="2">Host endoplasmic reticulum membrane</location>
        <topology evidence="2">Multi-pass membrane protein</topology>
    </subcellularLocation>
    <subcellularLocation>
        <location evidence="2">Host mitochondrion</location>
    </subcellularLocation>
    <text evidence="4">Interaction between glycoprotein N and glycoprotein C is essential for proper targeting of glycoprotein N to the host Golgi complex, where virion budding occurs.</text>
</comment>
<comment type="subcellular location">
    <molecule>Glycoprotein C</molecule>
    <subcellularLocation>
        <location evidence="2">Virion membrane</location>
        <topology>Single-pass type I membrane protein</topology>
    </subcellularLocation>
    <subcellularLocation>
        <location evidence="2">Host cell surface</location>
    </subcellularLocation>
    <subcellularLocation>
        <location evidence="2">Host Golgi apparatus membrane</location>
        <topology evidence="2">Single-pass type I membrane protein</topology>
    </subcellularLocation>
    <subcellularLocation>
        <location evidence="2">Host endoplasmic reticulum membrane</location>
        <topology evidence="2">Single-pass type I membrane protein</topology>
    </subcellularLocation>
    <text evidence="2 9">Budding probably takes place at the host Golgi (Probable). Glycoprotein C cytoplasmic tail is important for efficient Golgi localization (By similarity).</text>
</comment>
<comment type="domain">
    <molecule>Glycoprotein N</molecule>
    <text evidence="2 3 4 6">The YxxL motif at the C-terminus is indispensable for the interaction with MAP1LC3B and for the Gn-mediated induction of mitochondrial autophagy (By similarity). The cytoplasmic tail is involved in the inhibition of the host innate immune response (By similarity). The C-terminus of the cytoplasmic tail is involved in binding to the viral genome and the nucleocapsid (By similarity). Contains 2 contiguous zinc-fingers (By similarity).</text>
</comment>
<comment type="domain">
    <molecule>Glycoprotein C</molecule>
    <text evidence="4">The C-terminus is necessary for proper localization in the Golgi (By similarity). The cytoplasmic tail is involved in binding to the nucleocapsid (By similarity).</text>
</comment>
<comment type="PTM">
    <molecule>Envelopment polyprotein</molecule>
    <text evidence="2">Envelope polyprotein precursor is quickly cleaved in vivo just after synthesis, presumably by host signal peptidase.</text>
</comment>
<comment type="similarity">
    <text evidence="9">Belongs to the hantavirus envelope glycoprotein family.</text>
</comment>
<keyword id="KW-1015">Disulfide bond</keyword>
<keyword id="KW-1170">Fusion of virus membrane with host endosomal membrane</keyword>
<keyword id="KW-1168">Fusion of virus membrane with host membrane</keyword>
<keyword id="KW-0325">Glycoprotein</keyword>
<keyword id="KW-1038">Host endoplasmic reticulum</keyword>
<keyword id="KW-1040">Host Golgi apparatus</keyword>
<keyword id="KW-1043">Host membrane</keyword>
<keyword id="KW-1045">Host mitochondrion</keyword>
<keyword id="KW-0945">Host-virus interaction</keyword>
<keyword id="KW-1090">Inhibition of host innate immune response by virus</keyword>
<keyword id="KW-1113">Inhibition of host RLR pathway by virus</keyword>
<keyword id="KW-1110">Inhibition of host TRAFs by virus</keyword>
<keyword id="KW-0472">Membrane</keyword>
<keyword id="KW-0479">Metal-binding</keyword>
<keyword id="KW-0597">Phosphoprotein</keyword>
<keyword id="KW-0677">Repeat</keyword>
<keyword id="KW-0732">Signal</keyword>
<keyword id="KW-0812">Transmembrane</keyword>
<keyword id="KW-1133">Transmembrane helix</keyword>
<keyword id="KW-1161">Viral attachment to host cell</keyword>
<keyword id="KW-0261">Viral envelope protein</keyword>
<keyword id="KW-0899">Viral immunoevasion</keyword>
<keyword id="KW-1162">Viral penetration into host cytoplasm</keyword>
<keyword id="KW-0946">Virion</keyword>
<keyword id="KW-1164">Virus endocytosis by host</keyword>
<keyword id="KW-1160">Virus entry into host cell</keyword>
<keyword id="KW-0862">Zinc</keyword>
<keyword id="KW-0863">Zinc-finger</keyword>
<organismHost>
    <name type="scientific">Apodemus agrarius</name>
    <name type="common">Eurasian field mouse</name>
    <dbReference type="NCBI Taxonomy" id="39030"/>
</organismHost>
<organismHost>
    <name type="scientific">Homo sapiens</name>
    <name type="common">Human</name>
    <dbReference type="NCBI Taxonomy" id="9606"/>
</organismHost>